<sequence length="250" mass="28277">MEKLEKLYEGKAKQLYATDDPEVLWVEYKNTATAGDGEKKEDFTGKGRLNNLITTIIFDLLKKRGIDSHLIKRVNDTGQLVRKVNMFPLEIVLRNVAAGHFCSRLGVEEGLPLKEPVLEYFLKNDDLHDPFVNDDDLVALDVCTREDLAEIAPLARKINEALIEIFAKIDVKLVDFKIEMGRATDGTLLLADEITPDSCRLWDQKDHSGKVEHLDKDLFRRGLGSIIPAYEEIEERLAELAKSEGIEVAE</sequence>
<feature type="chain" id="PRO_1000122904" description="Phosphoribosylaminoimidazole-succinocarboxamide synthase">
    <location>
        <begin position="1"/>
        <end position="250"/>
    </location>
</feature>
<proteinExistence type="inferred from homology"/>
<organism>
    <name type="scientific">Bifidobacterium longum subsp. infantis (strain ATCC 15697 / DSM 20088 / JCM 1222 / NCTC 11817 / S12)</name>
    <dbReference type="NCBI Taxonomy" id="391904"/>
    <lineage>
        <taxon>Bacteria</taxon>
        <taxon>Bacillati</taxon>
        <taxon>Actinomycetota</taxon>
        <taxon>Actinomycetes</taxon>
        <taxon>Bifidobacteriales</taxon>
        <taxon>Bifidobacteriaceae</taxon>
        <taxon>Bifidobacterium</taxon>
    </lineage>
</organism>
<comment type="catalytic activity">
    <reaction evidence="1">
        <text>5-amino-1-(5-phospho-D-ribosyl)imidazole-4-carboxylate + L-aspartate + ATP = (2S)-2-[5-amino-1-(5-phospho-beta-D-ribosyl)imidazole-4-carboxamido]succinate + ADP + phosphate + 2 H(+)</text>
        <dbReference type="Rhea" id="RHEA:22628"/>
        <dbReference type="ChEBI" id="CHEBI:15378"/>
        <dbReference type="ChEBI" id="CHEBI:29991"/>
        <dbReference type="ChEBI" id="CHEBI:30616"/>
        <dbReference type="ChEBI" id="CHEBI:43474"/>
        <dbReference type="ChEBI" id="CHEBI:58443"/>
        <dbReference type="ChEBI" id="CHEBI:77657"/>
        <dbReference type="ChEBI" id="CHEBI:456216"/>
        <dbReference type="EC" id="6.3.2.6"/>
    </reaction>
</comment>
<comment type="pathway">
    <text evidence="1">Purine metabolism; IMP biosynthesis via de novo pathway; 5-amino-1-(5-phospho-D-ribosyl)imidazole-4-carboxamide from 5-amino-1-(5-phospho-D-ribosyl)imidazole-4-carboxylate: step 1/2.</text>
</comment>
<comment type="similarity">
    <text evidence="1">Belongs to the SAICAR synthetase family.</text>
</comment>
<protein>
    <recommendedName>
        <fullName evidence="1">Phosphoribosylaminoimidazole-succinocarboxamide synthase</fullName>
        <ecNumber evidence="1">6.3.2.6</ecNumber>
    </recommendedName>
    <alternativeName>
        <fullName evidence="1">SAICAR synthetase</fullName>
    </alternativeName>
</protein>
<accession>B7GU64</accession>
<accession>E8MM13</accession>
<reference key="1">
    <citation type="journal article" date="2008" name="Proc. Natl. Acad. Sci. U.S.A.">
        <title>The genome sequence of Bifidobacterium longum subsp. infantis reveals adaptations for milk utilization within the infant microbiome.</title>
        <authorList>
            <person name="Sela D.A."/>
            <person name="Chapman J."/>
            <person name="Adeuya A."/>
            <person name="Kim J.H."/>
            <person name="Chen F."/>
            <person name="Whitehead T.R."/>
            <person name="Lapidus A."/>
            <person name="Rokhsar D.S."/>
            <person name="Lebrilla C.B."/>
            <person name="German J.B."/>
            <person name="Price N.P."/>
            <person name="Richardson P.M."/>
            <person name="Mills D.A."/>
        </authorList>
    </citation>
    <scope>NUCLEOTIDE SEQUENCE [LARGE SCALE GENOMIC DNA]</scope>
    <source>
        <strain>ATCC 15697 / DSM 20088 / JCM 1222 / NCTC 11817 / S12</strain>
    </source>
</reference>
<reference key="2">
    <citation type="journal article" date="2011" name="Nature">
        <title>Bifidobacteria can protect from enteropathogenic infection through production of acetate.</title>
        <authorList>
            <person name="Fukuda S."/>
            <person name="Toh H."/>
            <person name="Hase K."/>
            <person name="Oshima K."/>
            <person name="Nakanishi Y."/>
            <person name="Yoshimura K."/>
            <person name="Tobe T."/>
            <person name="Clarke J.M."/>
            <person name="Topping D.L."/>
            <person name="Suzuki T."/>
            <person name="Taylor T.D."/>
            <person name="Itoh K."/>
            <person name="Kikuchi J."/>
            <person name="Morita H."/>
            <person name="Hattori M."/>
            <person name="Ohno H."/>
        </authorList>
    </citation>
    <scope>NUCLEOTIDE SEQUENCE [LARGE SCALE GENOMIC DNA]</scope>
    <source>
        <strain>ATCC 15697 / DSM 20088 / JCM 1222 / NCTC 11817 / S12</strain>
    </source>
</reference>
<dbReference type="EC" id="6.3.2.6" evidence="1"/>
<dbReference type="EMBL" id="CP001095">
    <property type="protein sequence ID" value="ACJ53010.1"/>
    <property type="molecule type" value="Genomic_DNA"/>
</dbReference>
<dbReference type="EMBL" id="AP010889">
    <property type="protein sequence ID" value="BAJ69590.1"/>
    <property type="molecule type" value="Genomic_DNA"/>
</dbReference>
<dbReference type="RefSeq" id="WP_012578217.1">
    <property type="nucleotide sequence ID" value="NZ_JDTT01000029.1"/>
</dbReference>
<dbReference type="SMR" id="B7GU64"/>
<dbReference type="KEGG" id="bln:Blon_1940"/>
<dbReference type="KEGG" id="blon:BLIJ_2012"/>
<dbReference type="PATRIC" id="fig|391904.8.peg.2019"/>
<dbReference type="HOGENOM" id="CLU_061495_2_0_11"/>
<dbReference type="UniPathway" id="UPA00074">
    <property type="reaction ID" value="UER00131"/>
</dbReference>
<dbReference type="Proteomes" id="UP000001360">
    <property type="component" value="Chromosome"/>
</dbReference>
<dbReference type="GO" id="GO:0005524">
    <property type="term" value="F:ATP binding"/>
    <property type="evidence" value="ECO:0007669"/>
    <property type="project" value="UniProtKB-KW"/>
</dbReference>
<dbReference type="GO" id="GO:0004639">
    <property type="term" value="F:phosphoribosylaminoimidazolesuccinocarboxamide synthase activity"/>
    <property type="evidence" value="ECO:0007669"/>
    <property type="project" value="UniProtKB-UniRule"/>
</dbReference>
<dbReference type="GO" id="GO:0006189">
    <property type="term" value="P:'de novo' IMP biosynthetic process"/>
    <property type="evidence" value="ECO:0007669"/>
    <property type="project" value="UniProtKB-UniRule"/>
</dbReference>
<dbReference type="GO" id="GO:0009236">
    <property type="term" value="P:cobalamin biosynthetic process"/>
    <property type="evidence" value="ECO:0007669"/>
    <property type="project" value="InterPro"/>
</dbReference>
<dbReference type="CDD" id="cd01415">
    <property type="entry name" value="SAICAR_synt_PurC"/>
    <property type="match status" value="1"/>
</dbReference>
<dbReference type="FunFam" id="3.30.470.20:FF:000006">
    <property type="entry name" value="Phosphoribosylaminoimidazole-succinocarboxamide synthase"/>
    <property type="match status" value="1"/>
</dbReference>
<dbReference type="Gene3D" id="3.30.470.20">
    <property type="entry name" value="ATP-grasp fold, B domain"/>
    <property type="match status" value="1"/>
</dbReference>
<dbReference type="Gene3D" id="3.30.200.20">
    <property type="entry name" value="Phosphorylase Kinase, domain 1"/>
    <property type="match status" value="1"/>
</dbReference>
<dbReference type="HAMAP" id="MF_00137">
    <property type="entry name" value="SAICAR_synth"/>
    <property type="match status" value="1"/>
</dbReference>
<dbReference type="InterPro" id="IPR028923">
    <property type="entry name" value="SAICAR_synt/ADE2_N"/>
</dbReference>
<dbReference type="InterPro" id="IPR033934">
    <property type="entry name" value="SAICAR_synt_PurC"/>
</dbReference>
<dbReference type="InterPro" id="IPR001636">
    <property type="entry name" value="SAICAR_synth"/>
</dbReference>
<dbReference type="InterPro" id="IPR050089">
    <property type="entry name" value="SAICAR_synthetase"/>
</dbReference>
<dbReference type="NCBIfam" id="TIGR00081">
    <property type="entry name" value="purC"/>
    <property type="match status" value="1"/>
</dbReference>
<dbReference type="PANTHER" id="PTHR43599">
    <property type="entry name" value="MULTIFUNCTIONAL PROTEIN ADE2"/>
    <property type="match status" value="1"/>
</dbReference>
<dbReference type="PANTHER" id="PTHR43599:SF3">
    <property type="entry name" value="SI:DKEY-6E2.2"/>
    <property type="match status" value="1"/>
</dbReference>
<dbReference type="Pfam" id="PF01259">
    <property type="entry name" value="SAICAR_synt"/>
    <property type="match status" value="1"/>
</dbReference>
<dbReference type="SUPFAM" id="SSF56104">
    <property type="entry name" value="SAICAR synthase-like"/>
    <property type="match status" value="1"/>
</dbReference>
<name>PUR7_BIFLS</name>
<evidence type="ECO:0000255" key="1">
    <source>
        <dbReference type="HAMAP-Rule" id="MF_00137"/>
    </source>
</evidence>
<gene>
    <name evidence="1" type="primary">purC</name>
    <name type="ordered locus">Blon_1940</name>
    <name type="ordered locus">BLIJ_2012</name>
</gene>
<keyword id="KW-0067">ATP-binding</keyword>
<keyword id="KW-0436">Ligase</keyword>
<keyword id="KW-0547">Nucleotide-binding</keyword>
<keyword id="KW-0658">Purine biosynthesis</keyword>